<proteinExistence type="evidence at transcript level"/>
<feature type="chain" id="PRO_0000423608" description="Plant intracellular Ras-group-related LRR protein 8">
    <location>
        <begin position="1"/>
        <end position="383"/>
    </location>
</feature>
<feature type="repeat" description="LRR 1">
    <location>
        <begin position="56"/>
        <end position="79"/>
    </location>
</feature>
<feature type="repeat" description="LRR 2">
    <location>
        <begin position="80"/>
        <end position="102"/>
    </location>
</feature>
<feature type="repeat" description="LRR 3">
    <location>
        <begin position="104"/>
        <end position="126"/>
    </location>
</feature>
<feature type="repeat" description="LRR 4">
    <location>
        <begin position="127"/>
        <end position="149"/>
    </location>
</feature>
<feature type="repeat" description="LRR 5">
    <location>
        <begin position="151"/>
        <end position="173"/>
    </location>
</feature>
<feature type="repeat" description="LRR 6">
    <location>
        <begin position="174"/>
        <end position="197"/>
    </location>
</feature>
<feature type="repeat" description="LRR 7">
    <location>
        <begin position="199"/>
        <end position="219"/>
    </location>
</feature>
<feature type="repeat" description="LRR 8">
    <location>
        <begin position="221"/>
        <end position="244"/>
    </location>
</feature>
<feature type="repeat" description="LRR 9">
    <location>
        <begin position="245"/>
        <end position="268"/>
    </location>
</feature>
<feature type="repeat" description="LRR 10">
    <location>
        <begin position="270"/>
        <end position="290"/>
    </location>
</feature>
<feature type="short sequence motif" description="GVYW; degenerate">
    <location>
        <begin position="291"/>
        <end position="298"/>
    </location>
</feature>
<evidence type="ECO:0000250" key="1"/>
<evidence type="ECO:0000269" key="2">
    <source>
    </source>
</evidence>
<evidence type="ECO:0000305" key="3"/>
<protein>
    <recommendedName>
        <fullName>Plant intracellular Ras-group-related LRR protein 8</fullName>
    </recommendedName>
</protein>
<organism>
    <name type="scientific">Arabidopsis thaliana</name>
    <name type="common">Mouse-ear cress</name>
    <dbReference type="NCBI Taxonomy" id="3702"/>
    <lineage>
        <taxon>Eukaryota</taxon>
        <taxon>Viridiplantae</taxon>
        <taxon>Streptophyta</taxon>
        <taxon>Embryophyta</taxon>
        <taxon>Tracheophyta</taxon>
        <taxon>Spermatophyta</taxon>
        <taxon>Magnoliopsida</taxon>
        <taxon>eudicotyledons</taxon>
        <taxon>Gunneridae</taxon>
        <taxon>Pentapetalae</taxon>
        <taxon>rosids</taxon>
        <taxon>malvids</taxon>
        <taxon>Brassicales</taxon>
        <taxon>Brassicaceae</taxon>
        <taxon>Camelineae</taxon>
        <taxon>Arabidopsis</taxon>
    </lineage>
</organism>
<accession>Q8RWE5</accession>
<accession>Q9SZH9</accession>
<gene>
    <name type="primary">PIRL8</name>
    <name type="ordered locus">At4g26050</name>
    <name type="ORF">F20B18.160</name>
</gene>
<reference key="1">
    <citation type="journal article" date="2005" name="Plant Cell Physiol.">
        <title>PIRLs: a novel class of plant intracellular leucine-rich repeat proteins.</title>
        <authorList>
            <person name="Forsthoefel N.R."/>
            <person name="Cutler K."/>
            <person name="Port M.D."/>
            <person name="Yamamoto T."/>
            <person name="Vernon D.M."/>
        </authorList>
    </citation>
    <scope>NUCLEOTIDE SEQUENCE [MRNA]</scope>
    <scope>GENE FAMILY</scope>
    <scope>MOTIF GVYW</scope>
    <scope>TISSUE SPECIFICITY</scope>
</reference>
<reference key="2">
    <citation type="journal article" date="1999" name="Nature">
        <title>Sequence and analysis of chromosome 4 of the plant Arabidopsis thaliana.</title>
        <authorList>
            <person name="Mayer K.F.X."/>
            <person name="Schueller C."/>
            <person name="Wambutt R."/>
            <person name="Murphy G."/>
            <person name="Volckaert G."/>
            <person name="Pohl T."/>
            <person name="Duesterhoeft A."/>
            <person name="Stiekema W."/>
            <person name="Entian K.-D."/>
            <person name="Terryn N."/>
            <person name="Harris B."/>
            <person name="Ansorge W."/>
            <person name="Brandt P."/>
            <person name="Grivell L.A."/>
            <person name="Rieger M."/>
            <person name="Weichselgartner M."/>
            <person name="de Simone V."/>
            <person name="Obermaier B."/>
            <person name="Mache R."/>
            <person name="Mueller M."/>
            <person name="Kreis M."/>
            <person name="Delseny M."/>
            <person name="Puigdomenech P."/>
            <person name="Watson M."/>
            <person name="Schmidtheini T."/>
            <person name="Reichert B."/>
            <person name="Portetelle D."/>
            <person name="Perez-Alonso M."/>
            <person name="Boutry M."/>
            <person name="Bancroft I."/>
            <person name="Vos P."/>
            <person name="Hoheisel J."/>
            <person name="Zimmermann W."/>
            <person name="Wedler H."/>
            <person name="Ridley P."/>
            <person name="Langham S.-A."/>
            <person name="McCullagh B."/>
            <person name="Bilham L."/>
            <person name="Robben J."/>
            <person name="van der Schueren J."/>
            <person name="Grymonprez B."/>
            <person name="Chuang Y.-J."/>
            <person name="Vandenbussche F."/>
            <person name="Braeken M."/>
            <person name="Weltjens I."/>
            <person name="Voet M."/>
            <person name="Bastiaens I."/>
            <person name="Aert R."/>
            <person name="Defoor E."/>
            <person name="Weitzenegger T."/>
            <person name="Bothe G."/>
            <person name="Ramsperger U."/>
            <person name="Hilbert H."/>
            <person name="Braun M."/>
            <person name="Holzer E."/>
            <person name="Brandt A."/>
            <person name="Peters S."/>
            <person name="van Staveren M."/>
            <person name="Dirkse W."/>
            <person name="Mooijman P."/>
            <person name="Klein Lankhorst R."/>
            <person name="Rose M."/>
            <person name="Hauf J."/>
            <person name="Koetter P."/>
            <person name="Berneiser S."/>
            <person name="Hempel S."/>
            <person name="Feldpausch M."/>
            <person name="Lamberth S."/>
            <person name="Van den Daele H."/>
            <person name="De Keyser A."/>
            <person name="Buysshaert C."/>
            <person name="Gielen J."/>
            <person name="Villarroel R."/>
            <person name="De Clercq R."/>
            <person name="van Montagu M."/>
            <person name="Rogers J."/>
            <person name="Cronin A."/>
            <person name="Quail M.A."/>
            <person name="Bray-Allen S."/>
            <person name="Clark L."/>
            <person name="Doggett J."/>
            <person name="Hall S."/>
            <person name="Kay M."/>
            <person name="Lennard N."/>
            <person name="McLay K."/>
            <person name="Mayes R."/>
            <person name="Pettett A."/>
            <person name="Rajandream M.A."/>
            <person name="Lyne M."/>
            <person name="Benes V."/>
            <person name="Rechmann S."/>
            <person name="Borkova D."/>
            <person name="Bloecker H."/>
            <person name="Scharfe M."/>
            <person name="Grimm M."/>
            <person name="Loehnert T.-H."/>
            <person name="Dose S."/>
            <person name="de Haan M."/>
            <person name="Maarse A.C."/>
            <person name="Schaefer M."/>
            <person name="Mueller-Auer S."/>
            <person name="Gabel C."/>
            <person name="Fuchs M."/>
            <person name="Fartmann B."/>
            <person name="Granderath K."/>
            <person name="Dauner D."/>
            <person name="Herzl A."/>
            <person name="Neumann S."/>
            <person name="Argiriou A."/>
            <person name="Vitale D."/>
            <person name="Liguori R."/>
            <person name="Piravandi E."/>
            <person name="Massenet O."/>
            <person name="Quigley F."/>
            <person name="Clabauld G."/>
            <person name="Muendlein A."/>
            <person name="Felber R."/>
            <person name="Schnabl S."/>
            <person name="Hiller R."/>
            <person name="Schmidt W."/>
            <person name="Lecharny A."/>
            <person name="Aubourg S."/>
            <person name="Chefdor F."/>
            <person name="Cooke R."/>
            <person name="Berger C."/>
            <person name="Monfort A."/>
            <person name="Casacuberta E."/>
            <person name="Gibbons T."/>
            <person name="Weber N."/>
            <person name="Vandenbol M."/>
            <person name="Bargues M."/>
            <person name="Terol J."/>
            <person name="Torres A."/>
            <person name="Perez-Perez A."/>
            <person name="Purnelle B."/>
            <person name="Bent E."/>
            <person name="Johnson S."/>
            <person name="Tacon D."/>
            <person name="Jesse T."/>
            <person name="Heijnen L."/>
            <person name="Schwarz S."/>
            <person name="Scholler P."/>
            <person name="Heber S."/>
            <person name="Francs P."/>
            <person name="Bielke C."/>
            <person name="Frishman D."/>
            <person name="Haase D."/>
            <person name="Lemcke K."/>
            <person name="Mewes H.-W."/>
            <person name="Stocker S."/>
            <person name="Zaccaria P."/>
            <person name="Bevan M."/>
            <person name="Wilson R.K."/>
            <person name="de la Bastide M."/>
            <person name="Habermann K."/>
            <person name="Parnell L."/>
            <person name="Dedhia N."/>
            <person name="Gnoj L."/>
            <person name="Schutz K."/>
            <person name="Huang E."/>
            <person name="Spiegel L."/>
            <person name="Sekhon M."/>
            <person name="Murray J."/>
            <person name="Sheet P."/>
            <person name="Cordes M."/>
            <person name="Abu-Threideh J."/>
            <person name="Stoneking T."/>
            <person name="Kalicki J."/>
            <person name="Graves T."/>
            <person name="Harmon G."/>
            <person name="Edwards J."/>
            <person name="Latreille P."/>
            <person name="Courtney L."/>
            <person name="Cloud J."/>
            <person name="Abbott A."/>
            <person name="Scott K."/>
            <person name="Johnson D."/>
            <person name="Minx P."/>
            <person name="Bentley D."/>
            <person name="Fulton B."/>
            <person name="Miller N."/>
            <person name="Greco T."/>
            <person name="Kemp K."/>
            <person name="Kramer J."/>
            <person name="Fulton L."/>
            <person name="Mardis E."/>
            <person name="Dante M."/>
            <person name="Pepin K."/>
            <person name="Hillier L.W."/>
            <person name="Nelson J."/>
            <person name="Spieth J."/>
            <person name="Ryan E."/>
            <person name="Andrews S."/>
            <person name="Geisel C."/>
            <person name="Layman D."/>
            <person name="Du H."/>
            <person name="Ali J."/>
            <person name="Berghoff A."/>
            <person name="Jones K."/>
            <person name="Drone K."/>
            <person name="Cotton M."/>
            <person name="Joshu C."/>
            <person name="Antonoiu B."/>
            <person name="Zidanic M."/>
            <person name="Strong C."/>
            <person name="Sun H."/>
            <person name="Lamar B."/>
            <person name="Yordan C."/>
            <person name="Ma P."/>
            <person name="Zhong J."/>
            <person name="Preston R."/>
            <person name="Vil D."/>
            <person name="Shekher M."/>
            <person name="Matero A."/>
            <person name="Shah R."/>
            <person name="Swaby I.K."/>
            <person name="O'Shaughnessy A."/>
            <person name="Rodriguez M."/>
            <person name="Hoffman J."/>
            <person name="Till S."/>
            <person name="Granat S."/>
            <person name="Shohdy N."/>
            <person name="Hasegawa A."/>
            <person name="Hameed A."/>
            <person name="Lodhi M."/>
            <person name="Johnson A."/>
            <person name="Chen E."/>
            <person name="Marra M.A."/>
            <person name="Martienssen R."/>
            <person name="McCombie W.R."/>
        </authorList>
    </citation>
    <scope>NUCLEOTIDE SEQUENCE [LARGE SCALE GENOMIC DNA]</scope>
    <source>
        <strain>cv. Columbia</strain>
    </source>
</reference>
<reference key="3">
    <citation type="journal article" date="2017" name="Plant J.">
        <title>Araport11: a complete reannotation of the Arabidopsis thaliana reference genome.</title>
        <authorList>
            <person name="Cheng C.Y."/>
            <person name="Krishnakumar V."/>
            <person name="Chan A.P."/>
            <person name="Thibaud-Nissen F."/>
            <person name="Schobel S."/>
            <person name="Town C.D."/>
        </authorList>
    </citation>
    <scope>GENOME REANNOTATION</scope>
    <source>
        <strain>cv. Columbia</strain>
    </source>
</reference>
<reference key="4">
    <citation type="journal article" date="2003" name="Science">
        <title>Empirical analysis of transcriptional activity in the Arabidopsis genome.</title>
        <authorList>
            <person name="Yamada K."/>
            <person name="Lim J."/>
            <person name="Dale J.M."/>
            <person name="Chen H."/>
            <person name="Shinn P."/>
            <person name="Palm C.J."/>
            <person name="Southwick A.M."/>
            <person name="Wu H.C."/>
            <person name="Kim C.J."/>
            <person name="Nguyen M."/>
            <person name="Pham P.K."/>
            <person name="Cheuk R.F."/>
            <person name="Karlin-Newmann G."/>
            <person name="Liu S.X."/>
            <person name="Lam B."/>
            <person name="Sakano H."/>
            <person name="Wu T."/>
            <person name="Yu G."/>
            <person name="Miranda M."/>
            <person name="Quach H.L."/>
            <person name="Tripp M."/>
            <person name="Chang C.H."/>
            <person name="Lee J.M."/>
            <person name="Toriumi M.J."/>
            <person name="Chan M.M."/>
            <person name="Tang C.C."/>
            <person name="Onodera C.S."/>
            <person name="Deng J.M."/>
            <person name="Akiyama K."/>
            <person name="Ansari Y."/>
            <person name="Arakawa T."/>
            <person name="Banh J."/>
            <person name="Banno F."/>
            <person name="Bowser L."/>
            <person name="Brooks S.Y."/>
            <person name="Carninci P."/>
            <person name="Chao Q."/>
            <person name="Choy N."/>
            <person name="Enju A."/>
            <person name="Goldsmith A.D."/>
            <person name="Gurjal M."/>
            <person name="Hansen N.F."/>
            <person name="Hayashizaki Y."/>
            <person name="Johnson-Hopson C."/>
            <person name="Hsuan V.W."/>
            <person name="Iida K."/>
            <person name="Karnes M."/>
            <person name="Khan S."/>
            <person name="Koesema E."/>
            <person name="Ishida J."/>
            <person name="Jiang P.X."/>
            <person name="Jones T."/>
            <person name="Kawai J."/>
            <person name="Kamiya A."/>
            <person name="Meyers C."/>
            <person name="Nakajima M."/>
            <person name="Narusaka M."/>
            <person name="Seki M."/>
            <person name="Sakurai T."/>
            <person name="Satou M."/>
            <person name="Tamse R."/>
            <person name="Vaysberg M."/>
            <person name="Wallender E.K."/>
            <person name="Wong C."/>
            <person name="Yamamura Y."/>
            <person name="Yuan S."/>
            <person name="Shinozaki K."/>
            <person name="Davis R.W."/>
            <person name="Theologis A."/>
            <person name="Ecker J.R."/>
        </authorList>
    </citation>
    <scope>NUCLEOTIDE SEQUENCE [LARGE SCALE MRNA]</scope>
    <source>
        <strain>cv. Columbia</strain>
    </source>
</reference>
<name>PIRL8_ARATH</name>
<comment type="function">
    <text evidence="1">Leucine-rich repeat protein that likely mediates protein interactions, possibly in the context of signal transduction.</text>
</comment>
<comment type="tissue specificity">
    <text evidence="2">Widely expressed except flowers.</text>
</comment>
<comment type="similarity">
    <text evidence="3">Belongs to the SHOC2 family.</text>
</comment>
<comment type="sequence caution" evidence="3">
    <conflict type="erroneous initiation">
        <sequence resource="EMBL-CDS" id="AAW57417"/>
    </conflict>
    <text>Truncated N-terminus.</text>
</comment>
<comment type="sequence caution" evidence="3">
    <conflict type="erroneous initiation">
        <sequence resource="EMBL-CDS" id="CAB39670"/>
    </conflict>
    <text>Truncated N-terminus.</text>
</comment>
<comment type="sequence caution" evidence="3">
    <conflict type="erroneous initiation">
        <sequence resource="EMBL-CDS" id="CAB79460"/>
    </conflict>
    <text>Truncated N-terminus.</text>
</comment>
<sequence>MMGYEQMNQMTMTTTAMMKNYNKKGLINTPQKKMTRRSVSAIDGGAAATAKEGDRRQNIKTLDLSGMSLASLSASSINLASISKLDLSNNNIQKIPESLVARMLNLWALDLQSNQLKTLPNSIGCLSKLKFLNVSGNYLQSLPKTIEDCRSLEELNANFNELTRLPDAIGFELTNLTKLSVNSNKLVLLPNSVSYLTSLRVLDARLNRLSSLPEDLENLVNLQVLNVSQNFQHLTTLPYSVGLLISLVELDVSYNGITVLPDSLGCLRRIQKLSVEGNPLISPPFEVVEQGLEALKQYMSEKMTESYKKTPTKKKSWGIGKLVKYGLSSSPGRSTGREDGKEGFINVSDYRQIDGIASPRHVSLFNPRRLLSPLSAYFSPPRY</sequence>
<keyword id="KW-0433">Leucine-rich repeat</keyword>
<keyword id="KW-1185">Reference proteome</keyword>
<keyword id="KW-0677">Repeat</keyword>
<dbReference type="EMBL" id="AY849578">
    <property type="protein sequence ID" value="AAW57417.1"/>
    <property type="status" value="ALT_INIT"/>
    <property type="molecule type" value="mRNA"/>
</dbReference>
<dbReference type="EMBL" id="AL049483">
    <property type="protein sequence ID" value="CAB39670.1"/>
    <property type="status" value="ALT_INIT"/>
    <property type="molecule type" value="Genomic_DNA"/>
</dbReference>
<dbReference type="EMBL" id="AL161564">
    <property type="protein sequence ID" value="CAB79460.1"/>
    <property type="status" value="ALT_INIT"/>
    <property type="molecule type" value="Genomic_DNA"/>
</dbReference>
<dbReference type="EMBL" id="CP002687">
    <property type="protein sequence ID" value="AEE85149.1"/>
    <property type="molecule type" value="Genomic_DNA"/>
</dbReference>
<dbReference type="EMBL" id="AY093142">
    <property type="protein sequence ID" value="AAM13141.1"/>
    <property type="molecule type" value="mRNA"/>
</dbReference>
<dbReference type="EMBL" id="BT008469">
    <property type="protein sequence ID" value="AAP37828.1"/>
    <property type="molecule type" value="mRNA"/>
</dbReference>
<dbReference type="PIR" id="T04260">
    <property type="entry name" value="T04260"/>
</dbReference>
<dbReference type="RefSeq" id="NP_194335.2">
    <property type="nucleotide sequence ID" value="NM_118738.6"/>
</dbReference>
<dbReference type="SMR" id="Q8RWE5"/>
<dbReference type="STRING" id="3702.Q8RWE5"/>
<dbReference type="iPTMnet" id="Q8RWE5"/>
<dbReference type="PaxDb" id="3702-AT4G26050.1"/>
<dbReference type="ProteomicsDB" id="235026"/>
<dbReference type="EnsemblPlants" id="AT4G26050.1">
    <property type="protein sequence ID" value="AT4G26050.1"/>
    <property type="gene ID" value="AT4G26050"/>
</dbReference>
<dbReference type="GeneID" id="828711"/>
<dbReference type="Gramene" id="AT4G26050.1">
    <property type="protein sequence ID" value="AT4G26050.1"/>
    <property type="gene ID" value="AT4G26050"/>
</dbReference>
<dbReference type="KEGG" id="ath:AT4G26050"/>
<dbReference type="Araport" id="AT4G26050"/>
<dbReference type="TAIR" id="AT4G26050">
    <property type="gene designation" value="PIRL8"/>
</dbReference>
<dbReference type="eggNOG" id="KOG0619">
    <property type="taxonomic scope" value="Eukaryota"/>
</dbReference>
<dbReference type="HOGENOM" id="CLU_000288_18_0_1"/>
<dbReference type="InParanoid" id="Q8RWE5"/>
<dbReference type="OMA" id="MVKCGTF"/>
<dbReference type="OrthoDB" id="1668230at2759"/>
<dbReference type="PhylomeDB" id="Q8RWE5"/>
<dbReference type="PRO" id="PR:Q8RWE5"/>
<dbReference type="Proteomes" id="UP000006548">
    <property type="component" value="Chromosome 4"/>
</dbReference>
<dbReference type="ExpressionAtlas" id="Q8RWE5">
    <property type="expression patterns" value="baseline and differential"/>
</dbReference>
<dbReference type="GO" id="GO:0005739">
    <property type="term" value="C:mitochondrion"/>
    <property type="evidence" value="ECO:0000314"/>
    <property type="project" value="TAIR"/>
</dbReference>
<dbReference type="GO" id="GO:0045292">
    <property type="term" value="P:mRNA cis splicing, via spliceosome"/>
    <property type="evidence" value="ECO:0000270"/>
    <property type="project" value="TAIR"/>
</dbReference>
<dbReference type="Gene3D" id="3.80.10.10">
    <property type="entry name" value="Ribonuclease Inhibitor"/>
    <property type="match status" value="2"/>
</dbReference>
<dbReference type="InterPro" id="IPR001611">
    <property type="entry name" value="Leu-rich_rpt"/>
</dbReference>
<dbReference type="InterPro" id="IPR003591">
    <property type="entry name" value="Leu-rich_rpt_typical-subtyp"/>
</dbReference>
<dbReference type="InterPro" id="IPR032675">
    <property type="entry name" value="LRR_dom_sf"/>
</dbReference>
<dbReference type="InterPro" id="IPR050216">
    <property type="entry name" value="LRR_domain-containing"/>
</dbReference>
<dbReference type="PANTHER" id="PTHR48051">
    <property type="match status" value="1"/>
</dbReference>
<dbReference type="PANTHER" id="PTHR48051:SF54">
    <property type="entry name" value="LEUCINE-RICH REPEAT-CONTAINING PROTEIN"/>
    <property type="match status" value="1"/>
</dbReference>
<dbReference type="Pfam" id="PF00560">
    <property type="entry name" value="LRR_1"/>
    <property type="match status" value="1"/>
</dbReference>
<dbReference type="Pfam" id="PF13855">
    <property type="entry name" value="LRR_8"/>
    <property type="match status" value="1"/>
</dbReference>
<dbReference type="SMART" id="SM00364">
    <property type="entry name" value="LRR_BAC"/>
    <property type="match status" value="8"/>
</dbReference>
<dbReference type="SMART" id="SM00369">
    <property type="entry name" value="LRR_TYP"/>
    <property type="match status" value="7"/>
</dbReference>
<dbReference type="SUPFAM" id="SSF52058">
    <property type="entry name" value="L domain-like"/>
    <property type="match status" value="1"/>
</dbReference>
<dbReference type="PROSITE" id="PS51450">
    <property type="entry name" value="LRR"/>
    <property type="match status" value="9"/>
</dbReference>